<keyword id="KW-0210">Decarboxylase</keyword>
<keyword id="KW-0456">Lyase</keyword>
<keyword id="KW-0665">Pyrimidine biosynthesis</keyword>
<gene>
    <name evidence="1" type="primary">pyrF</name>
    <name type="ordered locus">MmarC6_0290</name>
</gene>
<organism>
    <name type="scientific">Methanococcus maripaludis (strain C6 / ATCC BAA-1332)</name>
    <dbReference type="NCBI Taxonomy" id="444158"/>
    <lineage>
        <taxon>Archaea</taxon>
        <taxon>Methanobacteriati</taxon>
        <taxon>Methanobacteriota</taxon>
        <taxon>Methanomada group</taxon>
        <taxon>Methanococci</taxon>
        <taxon>Methanococcales</taxon>
        <taxon>Methanococcaceae</taxon>
        <taxon>Methanococcus</taxon>
    </lineage>
</organism>
<sequence>MYGESLVKLMLALDVMDEKKAVLIAKETSEYVDSIKIGYPLVLATGLNIIDKIKEATNKEVICDFKVADIPSTNEKIAELTLNHADGIICQGFVGSDSVSAILNVGKAKNKKVIMVTEMSHPGATEYLQNVAEDMAKMADRLKVDGIVAPSTRPERLEEIKSIAKDAFVISPGVGAQGGNLSDVLNVLSENDYVIIGRAIYENENPKEMAKKYRMQM</sequence>
<reference key="1">
    <citation type="submission" date="2007-10" db="EMBL/GenBank/DDBJ databases">
        <title>Complete sequence of Methanococcus maripaludis C6.</title>
        <authorList>
            <consortium name="US DOE Joint Genome Institute"/>
            <person name="Copeland A."/>
            <person name="Lucas S."/>
            <person name="Lapidus A."/>
            <person name="Barry K."/>
            <person name="Glavina del Rio T."/>
            <person name="Dalin E."/>
            <person name="Tice H."/>
            <person name="Pitluck S."/>
            <person name="Clum A."/>
            <person name="Schmutz J."/>
            <person name="Larimer F."/>
            <person name="Land M."/>
            <person name="Hauser L."/>
            <person name="Kyrpides N."/>
            <person name="Mikhailova N."/>
            <person name="Sieprawska-Lupa M."/>
            <person name="Whitman W.B."/>
            <person name="Richardson P."/>
        </authorList>
    </citation>
    <scope>NUCLEOTIDE SEQUENCE [LARGE SCALE GENOMIC DNA]</scope>
    <source>
        <strain>C6 / ATCC BAA-1332</strain>
    </source>
</reference>
<accession>A9A6C3</accession>
<comment type="function">
    <text evidence="1">Catalyzes the decarboxylation of orotidine 5'-monophosphate (OMP) to uridine 5'-monophosphate (UMP).</text>
</comment>
<comment type="catalytic activity">
    <reaction evidence="1">
        <text>orotidine 5'-phosphate + H(+) = UMP + CO2</text>
        <dbReference type="Rhea" id="RHEA:11596"/>
        <dbReference type="ChEBI" id="CHEBI:15378"/>
        <dbReference type="ChEBI" id="CHEBI:16526"/>
        <dbReference type="ChEBI" id="CHEBI:57538"/>
        <dbReference type="ChEBI" id="CHEBI:57865"/>
        <dbReference type="EC" id="4.1.1.23"/>
    </reaction>
</comment>
<comment type="pathway">
    <text evidence="1">Pyrimidine metabolism; UMP biosynthesis via de novo pathway; UMP from orotate: step 2/2.</text>
</comment>
<comment type="subunit">
    <text evidence="1">Homodimer.</text>
</comment>
<comment type="similarity">
    <text evidence="1">Belongs to the OMP decarboxylase family. Type 1 subfamily.</text>
</comment>
<proteinExistence type="inferred from homology"/>
<protein>
    <recommendedName>
        <fullName evidence="1">Orotidine 5'-phosphate decarboxylase</fullName>
        <ecNumber evidence="1">4.1.1.23</ecNumber>
    </recommendedName>
    <alternativeName>
        <fullName evidence="1">OMP decarboxylase</fullName>
        <shortName evidence="1">OMPDCase</shortName>
        <shortName evidence="1">OMPdecase</shortName>
    </alternativeName>
</protein>
<feature type="chain" id="PRO_1000138540" description="Orotidine 5'-phosphate decarboxylase">
    <location>
        <begin position="1"/>
        <end position="217"/>
    </location>
</feature>
<feature type="active site" description="Proton donor" evidence="1">
    <location>
        <position position="66"/>
    </location>
</feature>
<feature type="binding site" evidence="1">
    <location>
        <position position="14"/>
    </location>
    <ligand>
        <name>substrate</name>
    </ligand>
</feature>
<feature type="binding site" evidence="1">
    <location>
        <position position="36"/>
    </location>
    <ligand>
        <name>substrate</name>
    </ligand>
</feature>
<feature type="binding site" evidence="1">
    <location>
        <begin position="64"/>
        <end position="73"/>
    </location>
    <ligand>
        <name>substrate</name>
    </ligand>
</feature>
<feature type="binding site" evidence="1">
    <location>
        <position position="120"/>
    </location>
    <ligand>
        <name>substrate</name>
    </ligand>
</feature>
<feature type="binding site" evidence="1">
    <location>
        <begin position="172"/>
        <end position="182"/>
    </location>
    <ligand>
        <name>substrate</name>
    </ligand>
</feature>
<feature type="binding site" evidence="1">
    <location>
        <position position="197"/>
    </location>
    <ligand>
        <name>substrate</name>
    </ligand>
</feature>
<feature type="binding site" evidence="1">
    <location>
        <position position="198"/>
    </location>
    <ligand>
        <name>substrate</name>
    </ligand>
</feature>
<name>PYRF_METM6</name>
<dbReference type="EC" id="4.1.1.23" evidence="1"/>
<dbReference type="EMBL" id="CP000867">
    <property type="protein sequence ID" value="ABX01111.1"/>
    <property type="molecule type" value="Genomic_DNA"/>
</dbReference>
<dbReference type="SMR" id="A9A6C3"/>
<dbReference type="STRING" id="444158.MmarC6_0290"/>
<dbReference type="KEGG" id="mmx:MmarC6_0290"/>
<dbReference type="eggNOG" id="arCOG00081">
    <property type="taxonomic scope" value="Archaea"/>
</dbReference>
<dbReference type="HOGENOM" id="CLU_067069_2_0_2"/>
<dbReference type="OrthoDB" id="94124at2157"/>
<dbReference type="PhylomeDB" id="A9A6C3"/>
<dbReference type="UniPathway" id="UPA00070">
    <property type="reaction ID" value="UER00120"/>
</dbReference>
<dbReference type="GO" id="GO:0005829">
    <property type="term" value="C:cytosol"/>
    <property type="evidence" value="ECO:0007669"/>
    <property type="project" value="TreeGrafter"/>
</dbReference>
<dbReference type="GO" id="GO:0004590">
    <property type="term" value="F:orotidine-5'-phosphate decarboxylase activity"/>
    <property type="evidence" value="ECO:0007669"/>
    <property type="project" value="UniProtKB-UniRule"/>
</dbReference>
<dbReference type="GO" id="GO:0006207">
    <property type="term" value="P:'de novo' pyrimidine nucleobase biosynthetic process"/>
    <property type="evidence" value="ECO:0007669"/>
    <property type="project" value="InterPro"/>
</dbReference>
<dbReference type="GO" id="GO:0044205">
    <property type="term" value="P:'de novo' UMP biosynthetic process"/>
    <property type="evidence" value="ECO:0007669"/>
    <property type="project" value="UniProtKB-UniRule"/>
</dbReference>
<dbReference type="CDD" id="cd04725">
    <property type="entry name" value="OMP_decarboxylase_like"/>
    <property type="match status" value="1"/>
</dbReference>
<dbReference type="Gene3D" id="3.20.20.70">
    <property type="entry name" value="Aldolase class I"/>
    <property type="match status" value="1"/>
</dbReference>
<dbReference type="HAMAP" id="MF_01200_A">
    <property type="entry name" value="OMPdecase_type1_A"/>
    <property type="match status" value="1"/>
</dbReference>
<dbReference type="InterPro" id="IPR013785">
    <property type="entry name" value="Aldolase_TIM"/>
</dbReference>
<dbReference type="InterPro" id="IPR014732">
    <property type="entry name" value="OMPdecase"/>
</dbReference>
<dbReference type="InterPro" id="IPR047595">
    <property type="entry name" value="OMPdecase_arc"/>
</dbReference>
<dbReference type="InterPro" id="IPR018089">
    <property type="entry name" value="OMPdecase_AS"/>
</dbReference>
<dbReference type="InterPro" id="IPR001754">
    <property type="entry name" value="OMPdeCOase_dom"/>
</dbReference>
<dbReference type="InterPro" id="IPR011060">
    <property type="entry name" value="RibuloseP-bd_barrel"/>
</dbReference>
<dbReference type="NCBIfam" id="NF010386">
    <property type="entry name" value="PRK13813.1"/>
    <property type="match status" value="1"/>
</dbReference>
<dbReference type="NCBIfam" id="TIGR01740">
    <property type="entry name" value="pyrF"/>
    <property type="match status" value="1"/>
</dbReference>
<dbReference type="PANTHER" id="PTHR32119">
    <property type="entry name" value="OROTIDINE 5'-PHOSPHATE DECARBOXYLASE"/>
    <property type="match status" value="1"/>
</dbReference>
<dbReference type="PANTHER" id="PTHR32119:SF2">
    <property type="entry name" value="OROTIDINE 5'-PHOSPHATE DECARBOXYLASE"/>
    <property type="match status" value="1"/>
</dbReference>
<dbReference type="Pfam" id="PF00215">
    <property type="entry name" value="OMPdecase"/>
    <property type="match status" value="1"/>
</dbReference>
<dbReference type="SMART" id="SM00934">
    <property type="entry name" value="OMPdecase"/>
    <property type="match status" value="1"/>
</dbReference>
<dbReference type="SUPFAM" id="SSF51366">
    <property type="entry name" value="Ribulose-phoshate binding barrel"/>
    <property type="match status" value="1"/>
</dbReference>
<dbReference type="PROSITE" id="PS00156">
    <property type="entry name" value="OMPDECASE"/>
    <property type="match status" value="1"/>
</dbReference>
<evidence type="ECO:0000255" key="1">
    <source>
        <dbReference type="HAMAP-Rule" id="MF_01200"/>
    </source>
</evidence>